<accession>Q4L5X4</accession>
<protein>
    <recommendedName>
        <fullName evidence="1">tRNA pseudouridine synthase B</fullName>
        <ecNumber evidence="1">5.4.99.25</ecNumber>
    </recommendedName>
    <alternativeName>
        <fullName evidence="1">tRNA pseudouridine(55) synthase</fullName>
        <shortName evidence="1">Psi55 synthase</shortName>
    </alternativeName>
    <alternativeName>
        <fullName evidence="1">tRNA pseudouridylate synthase</fullName>
    </alternativeName>
    <alternativeName>
        <fullName evidence="1">tRNA-uridine isomerase</fullName>
    </alternativeName>
</protein>
<proteinExistence type="inferred from homology"/>
<name>TRUB_STAHJ</name>
<feature type="chain" id="PRO_0000229385" description="tRNA pseudouridine synthase B">
    <location>
        <begin position="1"/>
        <end position="305"/>
    </location>
</feature>
<feature type="active site" description="Nucleophile" evidence="1">
    <location>
        <position position="39"/>
    </location>
</feature>
<sequence length="305" mass="34466">MYNGILPVYKERGLTSHDVVFKLRKILKTKKIGHTGTLDPEVSGVLPVCIGTATRVSDYVMDMGKSYNATITLGESTTTEDQTGEVIDKIDVQANAININEVDAVLKQFEGIIEQVPPMYSSVKVNGKKLYEYARKGETVERPIRKVNIDSIARTSELQFEDGKCHFNIEVKCGKGTYIRTLATDIGKQLGYPAHMSLLTRINSGGFDIKDSITLDQISQLHEQDTLQPHLFPLEYGLKSLPKIYVSDENIKTRILNGQKFNKKQFNQTIEQQLVFIDSETEKVMAIYIQHPEKNHEIKPKKVFN</sequence>
<reference key="1">
    <citation type="journal article" date="2005" name="J. Bacteriol.">
        <title>Whole-genome sequencing of Staphylococcus haemolyticus uncovers the extreme plasticity of its genome and the evolution of human-colonizing staphylococcal species.</title>
        <authorList>
            <person name="Takeuchi F."/>
            <person name="Watanabe S."/>
            <person name="Baba T."/>
            <person name="Yuzawa H."/>
            <person name="Ito T."/>
            <person name="Morimoto Y."/>
            <person name="Kuroda M."/>
            <person name="Cui L."/>
            <person name="Takahashi M."/>
            <person name="Ankai A."/>
            <person name="Baba S."/>
            <person name="Fukui S."/>
            <person name="Lee J.C."/>
            <person name="Hiramatsu K."/>
        </authorList>
    </citation>
    <scope>NUCLEOTIDE SEQUENCE [LARGE SCALE GENOMIC DNA]</scope>
    <source>
        <strain>JCSC1435</strain>
    </source>
</reference>
<gene>
    <name evidence="1" type="primary">truB</name>
    <name type="ordered locus">SH1642</name>
</gene>
<comment type="function">
    <text evidence="1">Responsible for synthesis of pseudouridine from uracil-55 in the psi GC loop of transfer RNAs.</text>
</comment>
<comment type="catalytic activity">
    <reaction evidence="1">
        <text>uridine(55) in tRNA = pseudouridine(55) in tRNA</text>
        <dbReference type="Rhea" id="RHEA:42532"/>
        <dbReference type="Rhea" id="RHEA-COMP:10101"/>
        <dbReference type="Rhea" id="RHEA-COMP:10102"/>
        <dbReference type="ChEBI" id="CHEBI:65314"/>
        <dbReference type="ChEBI" id="CHEBI:65315"/>
        <dbReference type="EC" id="5.4.99.25"/>
    </reaction>
</comment>
<comment type="similarity">
    <text evidence="1">Belongs to the pseudouridine synthase TruB family. Type 1 subfamily.</text>
</comment>
<organism>
    <name type="scientific">Staphylococcus haemolyticus (strain JCSC1435)</name>
    <dbReference type="NCBI Taxonomy" id="279808"/>
    <lineage>
        <taxon>Bacteria</taxon>
        <taxon>Bacillati</taxon>
        <taxon>Bacillota</taxon>
        <taxon>Bacilli</taxon>
        <taxon>Bacillales</taxon>
        <taxon>Staphylococcaceae</taxon>
        <taxon>Staphylococcus</taxon>
    </lineage>
</organism>
<evidence type="ECO:0000255" key="1">
    <source>
        <dbReference type="HAMAP-Rule" id="MF_01080"/>
    </source>
</evidence>
<keyword id="KW-0413">Isomerase</keyword>
<keyword id="KW-0819">tRNA processing</keyword>
<dbReference type="EC" id="5.4.99.25" evidence="1"/>
<dbReference type="EMBL" id="AP006716">
    <property type="protein sequence ID" value="BAE04951.1"/>
    <property type="molecule type" value="Genomic_DNA"/>
</dbReference>
<dbReference type="RefSeq" id="WP_011275928.1">
    <property type="nucleotide sequence ID" value="NC_007168.1"/>
</dbReference>
<dbReference type="SMR" id="Q4L5X4"/>
<dbReference type="GeneID" id="93781021"/>
<dbReference type="KEGG" id="sha:SH1642"/>
<dbReference type="eggNOG" id="COG0130">
    <property type="taxonomic scope" value="Bacteria"/>
</dbReference>
<dbReference type="HOGENOM" id="CLU_032087_0_1_9"/>
<dbReference type="OrthoDB" id="9802309at2"/>
<dbReference type="Proteomes" id="UP000000543">
    <property type="component" value="Chromosome"/>
</dbReference>
<dbReference type="GO" id="GO:0003723">
    <property type="term" value="F:RNA binding"/>
    <property type="evidence" value="ECO:0007669"/>
    <property type="project" value="InterPro"/>
</dbReference>
<dbReference type="GO" id="GO:0160148">
    <property type="term" value="F:tRNA pseudouridine(55) synthase activity"/>
    <property type="evidence" value="ECO:0007669"/>
    <property type="project" value="UniProtKB-EC"/>
</dbReference>
<dbReference type="GO" id="GO:1990481">
    <property type="term" value="P:mRNA pseudouridine synthesis"/>
    <property type="evidence" value="ECO:0007669"/>
    <property type="project" value="TreeGrafter"/>
</dbReference>
<dbReference type="GO" id="GO:0031119">
    <property type="term" value="P:tRNA pseudouridine synthesis"/>
    <property type="evidence" value="ECO:0007669"/>
    <property type="project" value="UniProtKB-UniRule"/>
</dbReference>
<dbReference type="CDD" id="cd02573">
    <property type="entry name" value="PseudoU_synth_EcTruB"/>
    <property type="match status" value="1"/>
</dbReference>
<dbReference type="FunFam" id="3.30.2350.10:FF:000011">
    <property type="entry name" value="tRNA pseudouridine synthase B"/>
    <property type="match status" value="1"/>
</dbReference>
<dbReference type="Gene3D" id="3.30.2350.10">
    <property type="entry name" value="Pseudouridine synthase"/>
    <property type="match status" value="1"/>
</dbReference>
<dbReference type="HAMAP" id="MF_01080">
    <property type="entry name" value="TruB_bact"/>
    <property type="match status" value="1"/>
</dbReference>
<dbReference type="InterPro" id="IPR020103">
    <property type="entry name" value="PsdUridine_synth_cat_dom_sf"/>
</dbReference>
<dbReference type="InterPro" id="IPR002501">
    <property type="entry name" value="PsdUridine_synth_N"/>
</dbReference>
<dbReference type="InterPro" id="IPR014780">
    <property type="entry name" value="tRNA_psdUridine_synth_TruB"/>
</dbReference>
<dbReference type="InterPro" id="IPR032819">
    <property type="entry name" value="TruB_C"/>
</dbReference>
<dbReference type="NCBIfam" id="TIGR00431">
    <property type="entry name" value="TruB"/>
    <property type="match status" value="1"/>
</dbReference>
<dbReference type="PANTHER" id="PTHR13767:SF2">
    <property type="entry name" value="PSEUDOURIDYLATE SYNTHASE TRUB1"/>
    <property type="match status" value="1"/>
</dbReference>
<dbReference type="PANTHER" id="PTHR13767">
    <property type="entry name" value="TRNA-PSEUDOURIDINE SYNTHASE"/>
    <property type="match status" value="1"/>
</dbReference>
<dbReference type="Pfam" id="PF16198">
    <property type="entry name" value="TruB_C_2"/>
    <property type="match status" value="1"/>
</dbReference>
<dbReference type="Pfam" id="PF01509">
    <property type="entry name" value="TruB_N"/>
    <property type="match status" value="1"/>
</dbReference>
<dbReference type="SUPFAM" id="SSF55120">
    <property type="entry name" value="Pseudouridine synthase"/>
    <property type="match status" value="1"/>
</dbReference>